<name>RL18_RHORT</name>
<organism>
    <name type="scientific">Rhodospirillum rubrum (strain ATCC 11170 / ATH 1.1.1 / DSM 467 / LMG 4362 / NCIMB 8255 / S1)</name>
    <dbReference type="NCBI Taxonomy" id="269796"/>
    <lineage>
        <taxon>Bacteria</taxon>
        <taxon>Pseudomonadati</taxon>
        <taxon>Pseudomonadota</taxon>
        <taxon>Alphaproteobacteria</taxon>
        <taxon>Rhodospirillales</taxon>
        <taxon>Rhodospirillaceae</taxon>
        <taxon>Rhodospirillum</taxon>
    </lineage>
</organism>
<gene>
    <name evidence="1" type="primary">rplR</name>
    <name type="ordered locus">Rru_A2672</name>
</gene>
<evidence type="ECO:0000255" key="1">
    <source>
        <dbReference type="HAMAP-Rule" id="MF_01337"/>
    </source>
</evidence>
<evidence type="ECO:0000305" key="2"/>
<keyword id="KW-1185">Reference proteome</keyword>
<keyword id="KW-0687">Ribonucleoprotein</keyword>
<keyword id="KW-0689">Ribosomal protein</keyword>
<keyword id="KW-0694">RNA-binding</keyword>
<keyword id="KW-0699">rRNA-binding</keyword>
<reference key="1">
    <citation type="journal article" date="2011" name="Stand. Genomic Sci.">
        <title>Complete genome sequence of Rhodospirillum rubrum type strain (S1).</title>
        <authorList>
            <person name="Munk A.C."/>
            <person name="Copeland A."/>
            <person name="Lucas S."/>
            <person name="Lapidus A."/>
            <person name="Del Rio T.G."/>
            <person name="Barry K."/>
            <person name="Detter J.C."/>
            <person name="Hammon N."/>
            <person name="Israni S."/>
            <person name="Pitluck S."/>
            <person name="Brettin T."/>
            <person name="Bruce D."/>
            <person name="Han C."/>
            <person name="Tapia R."/>
            <person name="Gilna P."/>
            <person name="Schmutz J."/>
            <person name="Larimer F."/>
            <person name="Land M."/>
            <person name="Kyrpides N.C."/>
            <person name="Mavromatis K."/>
            <person name="Richardson P."/>
            <person name="Rohde M."/>
            <person name="Goeker M."/>
            <person name="Klenk H.P."/>
            <person name="Zhang Y."/>
            <person name="Roberts G.P."/>
            <person name="Reslewic S."/>
            <person name="Schwartz D.C."/>
        </authorList>
    </citation>
    <scope>NUCLEOTIDE SEQUENCE [LARGE SCALE GENOMIC DNA]</scope>
    <source>
        <strain>ATCC 11170 / ATH 1.1.1 / DSM 467 / LMG 4362 / NCIMB 8255 / S1</strain>
    </source>
</reference>
<dbReference type="EMBL" id="CP000230">
    <property type="protein sequence ID" value="ABC23469.1"/>
    <property type="molecule type" value="Genomic_DNA"/>
</dbReference>
<dbReference type="RefSeq" id="WP_011390422.1">
    <property type="nucleotide sequence ID" value="NC_007643.1"/>
</dbReference>
<dbReference type="RefSeq" id="YP_427756.1">
    <property type="nucleotide sequence ID" value="NC_007643.1"/>
</dbReference>
<dbReference type="SMR" id="Q2RQX6"/>
<dbReference type="STRING" id="269796.Rru_A2672"/>
<dbReference type="EnsemblBacteria" id="ABC23469">
    <property type="protein sequence ID" value="ABC23469"/>
    <property type="gene ID" value="Rru_A2672"/>
</dbReference>
<dbReference type="KEGG" id="rru:Rru_A2672"/>
<dbReference type="PATRIC" id="fig|269796.9.peg.2779"/>
<dbReference type="eggNOG" id="COG0256">
    <property type="taxonomic scope" value="Bacteria"/>
</dbReference>
<dbReference type="HOGENOM" id="CLU_098841_0_1_5"/>
<dbReference type="PhylomeDB" id="Q2RQX6"/>
<dbReference type="Proteomes" id="UP000001929">
    <property type="component" value="Chromosome"/>
</dbReference>
<dbReference type="GO" id="GO:0022625">
    <property type="term" value="C:cytosolic large ribosomal subunit"/>
    <property type="evidence" value="ECO:0007669"/>
    <property type="project" value="TreeGrafter"/>
</dbReference>
<dbReference type="GO" id="GO:0008097">
    <property type="term" value="F:5S rRNA binding"/>
    <property type="evidence" value="ECO:0007669"/>
    <property type="project" value="TreeGrafter"/>
</dbReference>
<dbReference type="GO" id="GO:0003735">
    <property type="term" value="F:structural constituent of ribosome"/>
    <property type="evidence" value="ECO:0007669"/>
    <property type="project" value="InterPro"/>
</dbReference>
<dbReference type="GO" id="GO:0006412">
    <property type="term" value="P:translation"/>
    <property type="evidence" value="ECO:0007669"/>
    <property type="project" value="UniProtKB-UniRule"/>
</dbReference>
<dbReference type="CDD" id="cd00432">
    <property type="entry name" value="Ribosomal_L18_L5e"/>
    <property type="match status" value="1"/>
</dbReference>
<dbReference type="FunFam" id="3.30.420.100:FF:000001">
    <property type="entry name" value="50S ribosomal protein L18"/>
    <property type="match status" value="1"/>
</dbReference>
<dbReference type="Gene3D" id="3.30.420.100">
    <property type="match status" value="1"/>
</dbReference>
<dbReference type="HAMAP" id="MF_01337_B">
    <property type="entry name" value="Ribosomal_uL18_B"/>
    <property type="match status" value="1"/>
</dbReference>
<dbReference type="InterPro" id="IPR004389">
    <property type="entry name" value="Ribosomal_uL18_bac-type"/>
</dbReference>
<dbReference type="InterPro" id="IPR005484">
    <property type="entry name" value="Ribosomal_uL18_bac/euk"/>
</dbReference>
<dbReference type="NCBIfam" id="TIGR00060">
    <property type="entry name" value="L18_bact"/>
    <property type="match status" value="1"/>
</dbReference>
<dbReference type="PANTHER" id="PTHR12899">
    <property type="entry name" value="39S RIBOSOMAL PROTEIN L18, MITOCHONDRIAL"/>
    <property type="match status" value="1"/>
</dbReference>
<dbReference type="PANTHER" id="PTHR12899:SF3">
    <property type="entry name" value="LARGE RIBOSOMAL SUBUNIT PROTEIN UL18M"/>
    <property type="match status" value="1"/>
</dbReference>
<dbReference type="Pfam" id="PF00861">
    <property type="entry name" value="Ribosomal_L18p"/>
    <property type="match status" value="1"/>
</dbReference>
<dbReference type="SUPFAM" id="SSF53137">
    <property type="entry name" value="Translational machinery components"/>
    <property type="match status" value="1"/>
</dbReference>
<sequence>MKSSSELFERRRSRNRYQIRLKSAGRLRLSVFRSNKHMYAQIIDDAEGRTLVSASTVDKELRGNLTKGGDKAAAAEVGKLLAERAKAAGYTEVVFDRGGYKYHGRVQALADAAREAGLSF</sequence>
<protein>
    <recommendedName>
        <fullName evidence="1">Large ribosomal subunit protein uL18</fullName>
    </recommendedName>
    <alternativeName>
        <fullName evidence="2">50S ribosomal protein L18</fullName>
    </alternativeName>
</protein>
<feature type="chain" id="PRO_0000251361" description="Large ribosomal subunit protein uL18">
    <location>
        <begin position="1"/>
        <end position="120"/>
    </location>
</feature>
<comment type="function">
    <text evidence="1">This is one of the proteins that bind and probably mediate the attachment of the 5S RNA into the large ribosomal subunit, where it forms part of the central protuberance.</text>
</comment>
<comment type="subunit">
    <text evidence="1">Part of the 50S ribosomal subunit; part of the 5S rRNA/L5/L18/L25 subcomplex. Contacts the 5S and 23S rRNAs.</text>
</comment>
<comment type="similarity">
    <text evidence="1">Belongs to the universal ribosomal protein uL18 family.</text>
</comment>
<accession>Q2RQX6</accession>
<proteinExistence type="inferred from homology"/>